<feature type="chain" id="PRO_5000147997" description="UPF0060 membrane protein Arth_4423">
    <location>
        <begin position="1"/>
        <end position="113"/>
    </location>
</feature>
<feature type="transmembrane region" description="Helical" evidence="1">
    <location>
        <begin position="7"/>
        <end position="27"/>
    </location>
</feature>
<feature type="transmembrane region" description="Helical" evidence="1">
    <location>
        <begin position="33"/>
        <end position="53"/>
    </location>
</feature>
<feature type="transmembrane region" description="Helical" evidence="1">
    <location>
        <begin position="62"/>
        <end position="82"/>
    </location>
</feature>
<feature type="transmembrane region" description="Helical" evidence="1">
    <location>
        <begin position="91"/>
        <end position="111"/>
    </location>
</feature>
<protein>
    <recommendedName>
        <fullName evidence="1">UPF0060 membrane protein Arth_4423</fullName>
    </recommendedName>
</protein>
<sequence>MTIAKSVLLFILAAVAEIGGAWLVWQAVREGRAWWWAGLGIIALGLYGFVATLQPDAHFGRILAAYGGVFVAGSLVWGMVFDGFRPDRWDVIGSVICLVGVAVIMFAPRGTTS</sequence>
<keyword id="KW-1003">Cell membrane</keyword>
<keyword id="KW-0472">Membrane</keyword>
<keyword id="KW-0614">Plasmid</keyword>
<keyword id="KW-1185">Reference proteome</keyword>
<keyword id="KW-0812">Transmembrane</keyword>
<keyword id="KW-1133">Transmembrane helix</keyword>
<evidence type="ECO:0000255" key="1">
    <source>
        <dbReference type="HAMAP-Rule" id="MF_00010"/>
    </source>
</evidence>
<evidence type="ECO:0000305" key="2"/>
<name>Y4423_ARTS2</name>
<gene>
    <name type="ordered locus">Arth_4423</name>
</gene>
<dbReference type="EMBL" id="CP000455">
    <property type="protein sequence ID" value="ABK05593.1"/>
    <property type="status" value="ALT_INIT"/>
    <property type="molecule type" value="Genomic_DNA"/>
</dbReference>
<dbReference type="RefSeq" id="WP_043431361.1">
    <property type="nucleotide sequence ID" value="NC_008537.1"/>
</dbReference>
<dbReference type="SMR" id="A0AW23"/>
<dbReference type="KEGG" id="art:Arth_4423"/>
<dbReference type="eggNOG" id="COG1742">
    <property type="taxonomic scope" value="Bacteria"/>
</dbReference>
<dbReference type="HOGENOM" id="CLU_117653_0_1_11"/>
<dbReference type="OrthoDB" id="123240at2"/>
<dbReference type="Proteomes" id="UP000000754">
    <property type="component" value="Plasmid FB24-1"/>
</dbReference>
<dbReference type="GO" id="GO:0005886">
    <property type="term" value="C:plasma membrane"/>
    <property type="evidence" value="ECO:0007669"/>
    <property type="project" value="UniProtKB-SubCell"/>
</dbReference>
<dbReference type="HAMAP" id="MF_00010">
    <property type="entry name" value="UPF0060"/>
    <property type="match status" value="1"/>
</dbReference>
<dbReference type="InterPro" id="IPR003844">
    <property type="entry name" value="UPF0060"/>
</dbReference>
<dbReference type="NCBIfam" id="NF002586">
    <property type="entry name" value="PRK02237.1"/>
    <property type="match status" value="1"/>
</dbReference>
<dbReference type="PANTHER" id="PTHR36116">
    <property type="entry name" value="UPF0060 MEMBRANE PROTEIN YNFA"/>
    <property type="match status" value="1"/>
</dbReference>
<dbReference type="PANTHER" id="PTHR36116:SF1">
    <property type="entry name" value="UPF0060 MEMBRANE PROTEIN YNFA"/>
    <property type="match status" value="1"/>
</dbReference>
<dbReference type="Pfam" id="PF02694">
    <property type="entry name" value="UPF0060"/>
    <property type="match status" value="1"/>
</dbReference>
<dbReference type="SUPFAM" id="SSF103481">
    <property type="entry name" value="Multidrug resistance efflux transporter EmrE"/>
    <property type="match status" value="1"/>
</dbReference>
<proteinExistence type="inferred from homology"/>
<reference key="1">
    <citation type="journal article" date="2013" name="Stand. Genomic Sci.">
        <title>Complete genome sequence of Arthrobacter sp. strain FB24.</title>
        <authorList>
            <person name="Nakatsu C.H."/>
            <person name="Barabote R."/>
            <person name="Thompson S."/>
            <person name="Bruce D."/>
            <person name="Detter C."/>
            <person name="Brettin T."/>
            <person name="Han C."/>
            <person name="Beasley F."/>
            <person name="Chen W."/>
            <person name="Konopka A."/>
            <person name="Xie G."/>
        </authorList>
    </citation>
    <scope>NUCLEOTIDE SEQUENCE [LARGE SCALE GENOMIC DNA]</scope>
    <source>
        <strain>FB24</strain>
    </source>
</reference>
<organism>
    <name type="scientific">Arthrobacter sp. (strain FB24)</name>
    <dbReference type="NCBI Taxonomy" id="290399"/>
    <lineage>
        <taxon>Bacteria</taxon>
        <taxon>Bacillati</taxon>
        <taxon>Actinomycetota</taxon>
        <taxon>Actinomycetes</taxon>
        <taxon>Micrococcales</taxon>
        <taxon>Micrococcaceae</taxon>
        <taxon>Arthrobacter</taxon>
    </lineage>
</organism>
<accession>A0AW23</accession>
<comment type="subcellular location">
    <subcellularLocation>
        <location evidence="1">Cell membrane</location>
        <topology evidence="1">Multi-pass membrane protein</topology>
    </subcellularLocation>
</comment>
<comment type="similarity">
    <text evidence="1">Belongs to the UPF0060 family.</text>
</comment>
<comment type="sequence caution" evidence="2">
    <conflict type="erroneous initiation">
        <sequence resource="EMBL-CDS" id="ABK05593"/>
    </conflict>
</comment>
<geneLocation type="plasmid">
    <name>FB24-1</name>
</geneLocation>